<accession>A5IRV6</accession>
<keyword id="KW-0067">ATP-binding</keyword>
<keyword id="KW-0963">Cytoplasm</keyword>
<keyword id="KW-0436">Ligase</keyword>
<keyword id="KW-0460">Magnesium</keyword>
<keyword id="KW-0479">Metal-binding</keyword>
<keyword id="KW-0547">Nucleotide-binding</keyword>
<keyword id="KW-0658">Purine biosynthesis</keyword>
<feature type="chain" id="PRO_1000080556" description="Phosphoribosylformylglycinamidine synthase subunit PurL">
    <location>
        <begin position="1"/>
        <end position="729"/>
    </location>
</feature>
<feature type="active site" evidence="1">
    <location>
        <position position="54"/>
    </location>
</feature>
<feature type="active site" description="Proton acceptor" evidence="1">
    <location>
        <position position="100"/>
    </location>
</feature>
<feature type="binding site" evidence="1">
    <location>
        <position position="57"/>
    </location>
    <ligand>
        <name>ATP</name>
        <dbReference type="ChEBI" id="CHEBI:30616"/>
    </ligand>
</feature>
<feature type="binding site" evidence="1">
    <location>
        <position position="96"/>
    </location>
    <ligand>
        <name>ATP</name>
        <dbReference type="ChEBI" id="CHEBI:30616"/>
    </ligand>
</feature>
<feature type="binding site" evidence="1">
    <location>
        <position position="98"/>
    </location>
    <ligand>
        <name>Mg(2+)</name>
        <dbReference type="ChEBI" id="CHEBI:18420"/>
        <label>1</label>
    </ligand>
</feature>
<feature type="binding site" evidence="1">
    <location>
        <begin position="99"/>
        <end position="102"/>
    </location>
    <ligand>
        <name>substrate</name>
    </ligand>
</feature>
<feature type="binding site" evidence="1">
    <location>
        <position position="121"/>
    </location>
    <ligand>
        <name>substrate</name>
    </ligand>
</feature>
<feature type="binding site" evidence="1">
    <location>
        <position position="122"/>
    </location>
    <ligand>
        <name>Mg(2+)</name>
        <dbReference type="ChEBI" id="CHEBI:18420"/>
        <label>2</label>
    </ligand>
</feature>
<feature type="binding site" evidence="1">
    <location>
        <position position="245"/>
    </location>
    <ligand>
        <name>substrate</name>
    </ligand>
</feature>
<feature type="binding site" evidence="1">
    <location>
        <position position="273"/>
    </location>
    <ligand>
        <name>Mg(2+)</name>
        <dbReference type="ChEBI" id="CHEBI:18420"/>
        <label>2</label>
    </ligand>
</feature>
<feature type="binding site" evidence="1">
    <location>
        <begin position="317"/>
        <end position="319"/>
    </location>
    <ligand>
        <name>substrate</name>
    </ligand>
</feature>
<feature type="binding site" evidence="1">
    <location>
        <position position="495"/>
    </location>
    <ligand>
        <name>ATP</name>
        <dbReference type="ChEBI" id="CHEBI:30616"/>
    </ligand>
</feature>
<feature type="binding site" evidence="1">
    <location>
        <position position="532"/>
    </location>
    <ligand>
        <name>ATP</name>
        <dbReference type="ChEBI" id="CHEBI:30616"/>
    </ligand>
</feature>
<feature type="binding site" evidence="1">
    <location>
        <position position="533"/>
    </location>
    <ligand>
        <name>Mg(2+)</name>
        <dbReference type="ChEBI" id="CHEBI:18420"/>
        <label>1</label>
    </ligand>
</feature>
<feature type="binding site" evidence="1">
    <location>
        <position position="535"/>
    </location>
    <ligand>
        <name>substrate</name>
    </ligand>
</feature>
<protein>
    <recommendedName>
        <fullName evidence="1">Phosphoribosylformylglycinamidine synthase subunit PurL</fullName>
        <shortName evidence="1">FGAM synthase</shortName>
        <ecNumber evidence="1">6.3.5.3</ecNumber>
    </recommendedName>
    <alternativeName>
        <fullName evidence="1">Formylglycinamide ribonucleotide amidotransferase subunit II</fullName>
        <shortName evidence="1">FGAR amidotransferase II</shortName>
        <shortName evidence="1">FGAR-AT II</shortName>
    </alternativeName>
    <alternativeName>
        <fullName evidence="1">Glutamine amidotransferase PurL</fullName>
    </alternativeName>
    <alternativeName>
        <fullName evidence="1">Phosphoribosylformylglycinamidine synthase subunit II</fullName>
    </alternativeName>
</protein>
<proteinExistence type="inferred from homology"/>
<reference key="1">
    <citation type="submission" date="2007-05" db="EMBL/GenBank/DDBJ databases">
        <title>Complete sequence of chromosome of Staphylococcus aureus subsp. aureus JH9.</title>
        <authorList>
            <consortium name="US DOE Joint Genome Institute"/>
            <person name="Copeland A."/>
            <person name="Lucas S."/>
            <person name="Lapidus A."/>
            <person name="Barry K."/>
            <person name="Detter J.C."/>
            <person name="Glavina del Rio T."/>
            <person name="Hammon N."/>
            <person name="Israni S."/>
            <person name="Pitluck S."/>
            <person name="Chain P."/>
            <person name="Malfatti S."/>
            <person name="Shin M."/>
            <person name="Vergez L."/>
            <person name="Schmutz J."/>
            <person name="Larimer F."/>
            <person name="Land M."/>
            <person name="Hauser L."/>
            <person name="Kyrpides N."/>
            <person name="Kim E."/>
            <person name="Tomasz A."/>
            <person name="Richardson P."/>
        </authorList>
    </citation>
    <scope>NUCLEOTIDE SEQUENCE [LARGE SCALE GENOMIC DNA]</scope>
    <source>
        <strain>JH9</strain>
    </source>
</reference>
<dbReference type="EC" id="6.3.5.3" evidence="1"/>
<dbReference type="EMBL" id="CP000703">
    <property type="protein sequence ID" value="ABQ48929.1"/>
    <property type="molecule type" value="Genomic_DNA"/>
</dbReference>
<dbReference type="RefSeq" id="WP_000032740.1">
    <property type="nucleotide sequence ID" value="NC_009487.1"/>
</dbReference>
<dbReference type="SMR" id="A5IRV6"/>
<dbReference type="KEGG" id="saj:SaurJH9_1129"/>
<dbReference type="HOGENOM" id="CLU_003100_0_1_9"/>
<dbReference type="UniPathway" id="UPA00074">
    <property type="reaction ID" value="UER00128"/>
</dbReference>
<dbReference type="GO" id="GO:0005737">
    <property type="term" value="C:cytoplasm"/>
    <property type="evidence" value="ECO:0007669"/>
    <property type="project" value="UniProtKB-SubCell"/>
</dbReference>
<dbReference type="GO" id="GO:0005524">
    <property type="term" value="F:ATP binding"/>
    <property type="evidence" value="ECO:0007669"/>
    <property type="project" value="UniProtKB-UniRule"/>
</dbReference>
<dbReference type="GO" id="GO:0000287">
    <property type="term" value="F:magnesium ion binding"/>
    <property type="evidence" value="ECO:0007669"/>
    <property type="project" value="UniProtKB-UniRule"/>
</dbReference>
<dbReference type="GO" id="GO:0004642">
    <property type="term" value="F:phosphoribosylformylglycinamidine synthase activity"/>
    <property type="evidence" value="ECO:0007669"/>
    <property type="project" value="UniProtKB-UniRule"/>
</dbReference>
<dbReference type="GO" id="GO:0006189">
    <property type="term" value="P:'de novo' IMP biosynthetic process"/>
    <property type="evidence" value="ECO:0007669"/>
    <property type="project" value="UniProtKB-UniRule"/>
</dbReference>
<dbReference type="CDD" id="cd02203">
    <property type="entry name" value="PurL_repeat1"/>
    <property type="match status" value="1"/>
</dbReference>
<dbReference type="CDD" id="cd02204">
    <property type="entry name" value="PurL_repeat2"/>
    <property type="match status" value="1"/>
</dbReference>
<dbReference type="FunFam" id="3.30.1330.10:FF:000004">
    <property type="entry name" value="Phosphoribosylformylglycinamidine synthase subunit PurL"/>
    <property type="match status" value="1"/>
</dbReference>
<dbReference type="Gene3D" id="3.90.650.10">
    <property type="entry name" value="PurM-like C-terminal domain"/>
    <property type="match status" value="2"/>
</dbReference>
<dbReference type="Gene3D" id="3.30.1330.10">
    <property type="entry name" value="PurM-like, N-terminal domain"/>
    <property type="match status" value="2"/>
</dbReference>
<dbReference type="HAMAP" id="MF_00420">
    <property type="entry name" value="PurL_2"/>
    <property type="match status" value="1"/>
</dbReference>
<dbReference type="InterPro" id="IPR010074">
    <property type="entry name" value="PRibForGlyAmidine_synth_PurL"/>
</dbReference>
<dbReference type="InterPro" id="IPR041609">
    <property type="entry name" value="PurL_linker"/>
</dbReference>
<dbReference type="InterPro" id="IPR010918">
    <property type="entry name" value="PurM-like_C_dom"/>
</dbReference>
<dbReference type="InterPro" id="IPR036676">
    <property type="entry name" value="PurM-like_C_sf"/>
</dbReference>
<dbReference type="InterPro" id="IPR016188">
    <property type="entry name" value="PurM-like_N"/>
</dbReference>
<dbReference type="InterPro" id="IPR036921">
    <property type="entry name" value="PurM-like_N_sf"/>
</dbReference>
<dbReference type="NCBIfam" id="TIGR01736">
    <property type="entry name" value="FGAM_synth_II"/>
    <property type="match status" value="1"/>
</dbReference>
<dbReference type="NCBIfam" id="NF002290">
    <property type="entry name" value="PRK01213.1"/>
    <property type="match status" value="1"/>
</dbReference>
<dbReference type="PANTHER" id="PTHR43555">
    <property type="entry name" value="PHOSPHORIBOSYLFORMYLGLYCINAMIDINE SYNTHASE SUBUNIT PURL"/>
    <property type="match status" value="1"/>
</dbReference>
<dbReference type="PANTHER" id="PTHR43555:SF1">
    <property type="entry name" value="PHOSPHORIBOSYLFORMYLGLYCINAMIDINE SYNTHASE SUBUNIT PURL"/>
    <property type="match status" value="1"/>
</dbReference>
<dbReference type="Pfam" id="PF00586">
    <property type="entry name" value="AIRS"/>
    <property type="match status" value="2"/>
</dbReference>
<dbReference type="Pfam" id="PF02769">
    <property type="entry name" value="AIRS_C"/>
    <property type="match status" value="1"/>
</dbReference>
<dbReference type="Pfam" id="PF18072">
    <property type="entry name" value="FGAR-AT_linker"/>
    <property type="match status" value="1"/>
</dbReference>
<dbReference type="PIRSF" id="PIRSF001587">
    <property type="entry name" value="FGAM_synthase_II"/>
    <property type="match status" value="1"/>
</dbReference>
<dbReference type="SUPFAM" id="SSF56042">
    <property type="entry name" value="PurM C-terminal domain-like"/>
    <property type="match status" value="2"/>
</dbReference>
<dbReference type="SUPFAM" id="SSF55326">
    <property type="entry name" value="PurM N-terminal domain-like"/>
    <property type="match status" value="2"/>
</dbReference>
<name>PURL_STAA9</name>
<organism>
    <name type="scientific">Staphylococcus aureus (strain JH9)</name>
    <dbReference type="NCBI Taxonomy" id="359786"/>
    <lineage>
        <taxon>Bacteria</taxon>
        <taxon>Bacillati</taxon>
        <taxon>Bacillota</taxon>
        <taxon>Bacilli</taxon>
        <taxon>Bacillales</taxon>
        <taxon>Staphylococcaceae</taxon>
        <taxon>Staphylococcus</taxon>
    </lineage>
</organism>
<gene>
    <name evidence="1" type="primary">purL</name>
    <name type="ordered locus">SaurJH9_1129</name>
</gene>
<sequence>MSKFIEPSVEEIKLEKVYQDMGLSDQEYEKVCDILGRQPNFTETGIFSVMWSEHCSYKHSKPFLKQFPTSGEHVLMGPGEGAGVVDIGDNQAVVFKVESHNHPSAIEPYQGAATGVGGIIRDIVSIGARPINLLNSLRFGELDNKQNQRLLKGVVKGIGGYGNCIGIPTTAGEIEFDERYDGNPLVNAMCVGVINHDMIQKGTAKGVGNSVIYVGLKTGRDGIHGATFASEELTEESESKRPSVQIGDPFVGKKLMEATLEAITFDELVGIQDMGAAGLTSSSSEMAAKGGSGLHLRLEQVPTREPGISPYEMMLSETQERMLLVVEKGNEQKFLDLFDKHELDSAVIGEVTDTNRFVLTYDDEVYADIPVEPLADEAPVYILEGEEKDYNTSKNDYTHIDVKDTFFKLLKHPTIASKHYLYDQYDQQVGANTIIKPGLQASVVRVEGTNKAIASTIDGEARYVYNNPYEGGKMVVAEAYRNLIAVGATPLAMTDCLNYGSPEKKEIYQQLIDSTKGMAEACDILKTPVVSGNVSLYNETKGTSIFPTPVVGMVGLIENVNYLNDFEPQVGDKLYLIGDTKDDFGGSQLEKLIYGKVNHEFESLDLSSEVEKGESIKTAIREGLLSHVQTVGKGGLLITLAKLSAHYGLGLKSSIDITNAQLFSETQGRYVVSVKSGKTLNIDNAIEIGLLTDSDNFKVTTPYTEISENVSDIKQIWEGAIAQCLTTQD</sequence>
<evidence type="ECO:0000255" key="1">
    <source>
        <dbReference type="HAMAP-Rule" id="MF_00420"/>
    </source>
</evidence>
<comment type="function">
    <text evidence="1">Part of the phosphoribosylformylglycinamidine synthase complex involved in the purines biosynthetic pathway. Catalyzes the ATP-dependent conversion of formylglycinamide ribonucleotide (FGAR) and glutamine to yield formylglycinamidine ribonucleotide (FGAM) and glutamate. The FGAM synthase complex is composed of three subunits. PurQ produces an ammonia molecule by converting glutamine to glutamate. PurL transfers the ammonia molecule to FGAR to form FGAM in an ATP-dependent manner. PurS interacts with PurQ and PurL and is thought to assist in the transfer of the ammonia molecule from PurQ to PurL.</text>
</comment>
<comment type="catalytic activity">
    <reaction evidence="1">
        <text>N(2)-formyl-N(1)-(5-phospho-beta-D-ribosyl)glycinamide + L-glutamine + ATP + H2O = 2-formamido-N(1)-(5-O-phospho-beta-D-ribosyl)acetamidine + L-glutamate + ADP + phosphate + H(+)</text>
        <dbReference type="Rhea" id="RHEA:17129"/>
        <dbReference type="ChEBI" id="CHEBI:15377"/>
        <dbReference type="ChEBI" id="CHEBI:15378"/>
        <dbReference type="ChEBI" id="CHEBI:29985"/>
        <dbReference type="ChEBI" id="CHEBI:30616"/>
        <dbReference type="ChEBI" id="CHEBI:43474"/>
        <dbReference type="ChEBI" id="CHEBI:58359"/>
        <dbReference type="ChEBI" id="CHEBI:147286"/>
        <dbReference type="ChEBI" id="CHEBI:147287"/>
        <dbReference type="ChEBI" id="CHEBI:456216"/>
        <dbReference type="EC" id="6.3.5.3"/>
    </reaction>
</comment>
<comment type="pathway">
    <text evidence="1">Purine metabolism; IMP biosynthesis via de novo pathway; 5-amino-1-(5-phospho-D-ribosyl)imidazole from N(2)-formyl-N(1)-(5-phospho-D-ribosyl)glycinamide: step 1/2.</text>
</comment>
<comment type="subunit">
    <text evidence="1">Monomer. Part of the FGAM synthase complex composed of 1 PurL, 1 PurQ and 2 PurS subunits.</text>
</comment>
<comment type="subcellular location">
    <subcellularLocation>
        <location evidence="1">Cytoplasm</location>
    </subcellularLocation>
</comment>
<comment type="similarity">
    <text evidence="1">Belongs to the FGAMS family.</text>
</comment>